<accession>Q48R96</accession>
<sequence length="89" mass="10504">MAISKEKKNEIIAQYARHEGDTGSVEVQVAVLTWEINHLNSHIKEHKKDHATYRGLMKKIGHRRNLLAYLRRTDVNRYRELIQSLGLRR</sequence>
<proteinExistence type="inferred from homology"/>
<protein>
    <recommendedName>
        <fullName evidence="1">Small ribosomal subunit protein uS15</fullName>
    </recommendedName>
    <alternativeName>
        <fullName evidence="2">30S ribosomal protein S15</fullName>
    </alternativeName>
</protein>
<organism>
    <name type="scientific">Streptococcus pyogenes serotype M28 (strain MGAS6180)</name>
    <dbReference type="NCBI Taxonomy" id="319701"/>
    <lineage>
        <taxon>Bacteria</taxon>
        <taxon>Bacillati</taxon>
        <taxon>Bacillota</taxon>
        <taxon>Bacilli</taxon>
        <taxon>Lactobacillales</taxon>
        <taxon>Streptococcaceae</taxon>
        <taxon>Streptococcus</taxon>
    </lineage>
</organism>
<feature type="chain" id="PRO_0000115557" description="Small ribosomal subunit protein uS15">
    <location>
        <begin position="1"/>
        <end position="89"/>
    </location>
</feature>
<keyword id="KW-0687">Ribonucleoprotein</keyword>
<keyword id="KW-0689">Ribosomal protein</keyword>
<keyword id="KW-0694">RNA-binding</keyword>
<keyword id="KW-0699">rRNA-binding</keyword>
<name>RS15_STRPM</name>
<gene>
    <name evidence="1" type="primary">rpsO</name>
    <name type="ordered locus">M28_Spy1654</name>
</gene>
<reference key="1">
    <citation type="journal article" date="2005" name="J. Infect. Dis.">
        <title>Genome sequence of a serotype M28 strain of group A Streptococcus: potential new insights into puerperal sepsis and bacterial disease specificity.</title>
        <authorList>
            <person name="Green N.M."/>
            <person name="Zhang S."/>
            <person name="Porcella S.F."/>
            <person name="Nagiec M.J."/>
            <person name="Barbian K.D."/>
            <person name="Beres S.B."/>
            <person name="Lefebvre R.B."/>
            <person name="Musser J.M."/>
        </authorList>
    </citation>
    <scope>NUCLEOTIDE SEQUENCE [LARGE SCALE GENOMIC DNA]</scope>
    <source>
        <strain>MGAS6180</strain>
    </source>
</reference>
<dbReference type="EMBL" id="CP000056">
    <property type="protein sequence ID" value="AAX72764.1"/>
    <property type="molecule type" value="Genomic_DNA"/>
</dbReference>
<dbReference type="RefSeq" id="WP_002982634.1">
    <property type="nucleotide sequence ID" value="NC_007296.2"/>
</dbReference>
<dbReference type="SMR" id="Q48R96"/>
<dbReference type="KEGG" id="spb:M28_Spy1654"/>
<dbReference type="HOGENOM" id="CLU_148518_0_0_9"/>
<dbReference type="GO" id="GO:0022627">
    <property type="term" value="C:cytosolic small ribosomal subunit"/>
    <property type="evidence" value="ECO:0007669"/>
    <property type="project" value="TreeGrafter"/>
</dbReference>
<dbReference type="GO" id="GO:0019843">
    <property type="term" value="F:rRNA binding"/>
    <property type="evidence" value="ECO:0007669"/>
    <property type="project" value="UniProtKB-UniRule"/>
</dbReference>
<dbReference type="GO" id="GO:0003735">
    <property type="term" value="F:structural constituent of ribosome"/>
    <property type="evidence" value="ECO:0007669"/>
    <property type="project" value="InterPro"/>
</dbReference>
<dbReference type="GO" id="GO:0006412">
    <property type="term" value="P:translation"/>
    <property type="evidence" value="ECO:0007669"/>
    <property type="project" value="UniProtKB-UniRule"/>
</dbReference>
<dbReference type="CDD" id="cd00353">
    <property type="entry name" value="Ribosomal_S15p_S13e"/>
    <property type="match status" value="1"/>
</dbReference>
<dbReference type="FunFam" id="1.10.287.10:FF:000002">
    <property type="entry name" value="30S ribosomal protein S15"/>
    <property type="match status" value="1"/>
</dbReference>
<dbReference type="Gene3D" id="6.10.250.3130">
    <property type="match status" value="1"/>
</dbReference>
<dbReference type="Gene3D" id="1.10.287.10">
    <property type="entry name" value="S15/NS1, RNA-binding"/>
    <property type="match status" value="1"/>
</dbReference>
<dbReference type="HAMAP" id="MF_01343_B">
    <property type="entry name" value="Ribosomal_uS15_B"/>
    <property type="match status" value="1"/>
</dbReference>
<dbReference type="InterPro" id="IPR000589">
    <property type="entry name" value="Ribosomal_uS15"/>
</dbReference>
<dbReference type="InterPro" id="IPR005290">
    <property type="entry name" value="Ribosomal_uS15_bac-type"/>
</dbReference>
<dbReference type="InterPro" id="IPR009068">
    <property type="entry name" value="uS15_NS1_RNA-bd_sf"/>
</dbReference>
<dbReference type="NCBIfam" id="TIGR00952">
    <property type="entry name" value="S15_bact"/>
    <property type="match status" value="1"/>
</dbReference>
<dbReference type="PANTHER" id="PTHR23321">
    <property type="entry name" value="RIBOSOMAL PROTEIN S15, BACTERIAL AND ORGANELLAR"/>
    <property type="match status" value="1"/>
</dbReference>
<dbReference type="PANTHER" id="PTHR23321:SF26">
    <property type="entry name" value="SMALL RIBOSOMAL SUBUNIT PROTEIN US15M"/>
    <property type="match status" value="1"/>
</dbReference>
<dbReference type="Pfam" id="PF00312">
    <property type="entry name" value="Ribosomal_S15"/>
    <property type="match status" value="1"/>
</dbReference>
<dbReference type="SMART" id="SM01387">
    <property type="entry name" value="Ribosomal_S15"/>
    <property type="match status" value="1"/>
</dbReference>
<dbReference type="SUPFAM" id="SSF47060">
    <property type="entry name" value="S15/NS1 RNA-binding domain"/>
    <property type="match status" value="1"/>
</dbReference>
<dbReference type="PROSITE" id="PS00362">
    <property type="entry name" value="RIBOSOMAL_S15"/>
    <property type="match status" value="1"/>
</dbReference>
<evidence type="ECO:0000255" key="1">
    <source>
        <dbReference type="HAMAP-Rule" id="MF_01343"/>
    </source>
</evidence>
<evidence type="ECO:0000305" key="2"/>
<comment type="function">
    <text evidence="1">One of the primary rRNA binding proteins, it binds directly to 16S rRNA where it helps nucleate assembly of the platform of the 30S subunit by binding and bridging several RNA helices of the 16S rRNA.</text>
</comment>
<comment type="function">
    <text evidence="1">Forms an intersubunit bridge (bridge B4) with the 23S rRNA of the 50S subunit in the ribosome.</text>
</comment>
<comment type="subunit">
    <text evidence="1">Part of the 30S ribosomal subunit. Forms a bridge to the 50S subunit in the 70S ribosome, contacting the 23S rRNA.</text>
</comment>
<comment type="similarity">
    <text evidence="1">Belongs to the universal ribosomal protein uS15 family.</text>
</comment>